<accession>P21256</accession>
<accession>Q79DX4</accession>
<proteinExistence type="evidence at protein level"/>
<feature type="chain" id="PRO_0000174082" description="Pesticidal crystal protein Cry11Aa">
    <location>
        <begin position="1"/>
        <end position="643"/>
    </location>
</feature>
<feature type="strand" evidence="2">
    <location>
        <begin position="23"/>
        <end position="25"/>
    </location>
</feature>
<feature type="helix" evidence="2">
    <location>
        <begin position="30"/>
        <end position="32"/>
    </location>
</feature>
<feature type="helix" evidence="2">
    <location>
        <begin position="36"/>
        <end position="47"/>
    </location>
</feature>
<feature type="turn" evidence="2">
    <location>
        <begin position="51"/>
        <end position="53"/>
    </location>
</feature>
<feature type="helix" evidence="2">
    <location>
        <begin position="54"/>
        <end position="62"/>
    </location>
</feature>
<feature type="helix" evidence="2">
    <location>
        <begin position="64"/>
        <end position="66"/>
    </location>
</feature>
<feature type="helix" evidence="2">
    <location>
        <begin position="69"/>
        <end position="82"/>
    </location>
</feature>
<feature type="helix" evidence="2">
    <location>
        <begin position="88"/>
        <end position="112"/>
    </location>
</feature>
<feature type="helix" evidence="2">
    <location>
        <begin position="119"/>
        <end position="136"/>
    </location>
</feature>
<feature type="helix" evidence="2">
    <location>
        <begin position="137"/>
        <end position="140"/>
    </location>
</feature>
<feature type="helix" evidence="2">
    <location>
        <begin position="143"/>
        <end position="145"/>
    </location>
</feature>
<feature type="helix" evidence="2">
    <location>
        <begin position="146"/>
        <end position="169"/>
    </location>
</feature>
<feature type="helix" evidence="2">
    <location>
        <begin position="172"/>
        <end position="174"/>
    </location>
</feature>
<feature type="helix" evidence="2">
    <location>
        <begin position="178"/>
        <end position="213"/>
    </location>
</feature>
<feature type="helix" evidence="2">
    <location>
        <begin position="215"/>
        <end position="228"/>
    </location>
</feature>
<feature type="helix" evidence="2">
    <location>
        <begin position="230"/>
        <end position="236"/>
    </location>
</feature>
<feature type="turn" evidence="2">
    <location>
        <begin position="237"/>
        <end position="240"/>
    </location>
</feature>
<feature type="strand" evidence="2">
    <location>
        <begin position="241"/>
        <end position="243"/>
    </location>
</feature>
<feature type="strand" evidence="2">
    <location>
        <begin position="252"/>
        <end position="258"/>
    </location>
</feature>
<feature type="helix" evidence="2">
    <location>
        <begin position="264"/>
        <end position="269"/>
    </location>
</feature>
<feature type="helix" evidence="2">
    <location>
        <begin position="271"/>
        <end position="276"/>
    </location>
</feature>
<feature type="strand" evidence="2">
    <location>
        <begin position="285"/>
        <end position="293"/>
    </location>
</feature>
<feature type="strand" evidence="2">
    <location>
        <begin position="296"/>
        <end position="299"/>
    </location>
</feature>
<feature type="strand" evidence="2">
    <location>
        <begin position="302"/>
        <end position="311"/>
    </location>
</feature>
<feature type="turn" evidence="2">
    <location>
        <begin position="314"/>
        <end position="316"/>
    </location>
</feature>
<feature type="strand" evidence="2">
    <location>
        <begin position="319"/>
        <end position="323"/>
    </location>
</feature>
<feature type="strand" evidence="2">
    <location>
        <begin position="329"/>
        <end position="331"/>
    </location>
</feature>
<feature type="turn" evidence="2">
    <location>
        <begin position="335"/>
        <end position="337"/>
    </location>
</feature>
<feature type="strand" evidence="2">
    <location>
        <begin position="342"/>
        <end position="347"/>
    </location>
</feature>
<feature type="strand" evidence="2">
    <location>
        <begin position="352"/>
        <end position="354"/>
    </location>
</feature>
<feature type="strand" evidence="2">
    <location>
        <begin position="360"/>
        <end position="370"/>
    </location>
</feature>
<feature type="strand" evidence="3">
    <location>
        <begin position="375"/>
        <end position="377"/>
    </location>
</feature>
<feature type="strand" evidence="2">
    <location>
        <begin position="383"/>
        <end position="389"/>
    </location>
</feature>
<feature type="strand" evidence="2">
    <location>
        <begin position="392"/>
        <end position="401"/>
    </location>
</feature>
<feature type="strand" evidence="2">
    <location>
        <begin position="404"/>
        <end position="407"/>
    </location>
</feature>
<feature type="strand" evidence="2">
    <location>
        <begin position="410"/>
        <end position="412"/>
    </location>
</feature>
<feature type="strand" evidence="2">
    <location>
        <begin position="417"/>
        <end position="419"/>
    </location>
</feature>
<feature type="strand" evidence="2">
    <location>
        <begin position="424"/>
        <end position="430"/>
    </location>
</feature>
<feature type="strand" evidence="2">
    <location>
        <begin position="434"/>
        <end position="436"/>
    </location>
</feature>
<feature type="turn" evidence="2">
    <location>
        <begin position="442"/>
        <end position="444"/>
    </location>
</feature>
<feature type="strand" evidence="2">
    <location>
        <begin position="447"/>
        <end position="450"/>
    </location>
</feature>
<feature type="strand" evidence="2">
    <location>
        <begin position="452"/>
        <end position="455"/>
    </location>
</feature>
<feature type="strand" evidence="2">
    <location>
        <begin position="461"/>
        <end position="468"/>
    </location>
</feature>
<feature type="helix" evidence="2">
    <location>
        <begin position="469"/>
        <end position="471"/>
    </location>
</feature>
<feature type="helix" evidence="2">
    <location>
        <begin position="472"/>
        <end position="477"/>
    </location>
</feature>
<feature type="strand" evidence="2">
    <location>
        <begin position="478"/>
        <end position="482"/>
    </location>
</feature>
<feature type="strand" evidence="2">
    <location>
        <begin position="487"/>
        <end position="492"/>
    </location>
</feature>
<feature type="strand" evidence="2">
    <location>
        <begin position="497"/>
        <end position="499"/>
    </location>
</feature>
<feature type="strand" evidence="2">
    <location>
        <begin position="501"/>
        <end position="506"/>
    </location>
</feature>
<feature type="helix" evidence="2">
    <location>
        <begin position="509"/>
        <end position="511"/>
    </location>
</feature>
<feature type="strand" evidence="2">
    <location>
        <begin position="516"/>
        <end position="519"/>
    </location>
</feature>
<feature type="strand" evidence="2">
    <location>
        <begin position="526"/>
        <end position="534"/>
    </location>
</feature>
<feature type="strand" evidence="2">
    <location>
        <begin position="542"/>
        <end position="554"/>
    </location>
</feature>
<feature type="strand" evidence="2">
    <location>
        <begin position="556"/>
        <end position="566"/>
    </location>
</feature>
<feature type="strand" evidence="2">
    <location>
        <begin position="569"/>
        <end position="578"/>
    </location>
</feature>
<feature type="strand" evidence="2">
    <location>
        <begin position="581"/>
        <end position="588"/>
    </location>
</feature>
<feature type="turn" evidence="2">
    <location>
        <begin position="594"/>
        <end position="598"/>
    </location>
</feature>
<feature type="strand" evidence="2">
    <location>
        <begin position="607"/>
        <end position="612"/>
    </location>
</feature>
<feature type="strand" evidence="2">
    <location>
        <begin position="621"/>
        <end position="630"/>
    </location>
</feature>
<feature type="helix" evidence="2">
    <location>
        <begin position="631"/>
        <end position="633"/>
    </location>
</feature>
<organism>
    <name type="scientific">Bacillus thuringiensis subsp. israelensis</name>
    <dbReference type="NCBI Taxonomy" id="1430"/>
    <lineage>
        <taxon>Bacteria</taxon>
        <taxon>Bacillati</taxon>
        <taxon>Bacillota</taxon>
        <taxon>Bacilli</taxon>
        <taxon>Bacillales</taxon>
        <taxon>Bacillaceae</taxon>
        <taxon>Bacillus</taxon>
        <taxon>Bacillus cereus group</taxon>
    </lineage>
</organism>
<protein>
    <recommendedName>
        <fullName>Pesticidal crystal protein Cry11Aa</fullName>
    </recommendedName>
    <alternativeName>
        <fullName>72 kDa crystal protein</fullName>
    </alternativeName>
    <alternativeName>
        <fullName>Crystaline entomocidal protoxin</fullName>
    </alternativeName>
    <alternativeName>
        <fullName>Insecticidal delta-endotoxin CryXIA(a)</fullName>
    </alternativeName>
</protein>
<evidence type="ECO:0000305" key="1"/>
<evidence type="ECO:0007829" key="2">
    <source>
        <dbReference type="PDB" id="7QX4"/>
    </source>
</evidence>
<evidence type="ECO:0007829" key="3">
    <source>
        <dbReference type="PDB" id="7QX5"/>
    </source>
</evidence>
<sequence length="643" mass="72349">MEDSSLDTLSIVNETDFPLYNNYTEPTIAPALIAVAPIAQYLATAIGKWAAKAAFSKVLSLIFPGSQPATMEKVRTEVETLINQKLSQDRVNILNAEYRGIIEVSDVFDAYIKQPGFTPATAKGYFLNLSGAIIQRLPQFEVQTYEGVSIALFTQMCTLHLTLLKDGILAGSAWGFTQADVDSFIKLFNQKVLDYRTRLMRMYTEEFGRLCKVSLKDGLTFRNMCNLYVFPFAEAWSLMRYEGLKLQSSLSLWDYVGVSIPVNYNEWGGLVYKLLMGEVNQRLTTVKFNYSFTNEPADIPARENIRGVHPIYDPSSGLTGWIGNGRTNNFNFADNNGNEIMEVRTQTFYQNPNNEPIAPRDIINQILTAPAPADLFFKNADINVKFTQWFQSTLYGWNIKLGTQTVLSSRTGTIPPNYLAYDGYYIRAISACPRGVSLAYNHDLTTLTYNRIEYDSPTTENIIVGFAPDNTKDFYSKKSHYLSETNDSYVIPALQFAEVSDRSFLEDTPDQATDGSIKFARTFISNEAKYSIRLNTGFNTATRYKLIIRVRVPYRLPAGIRVQSQNSGNNRMLGSFTANANPEWVDFVTDAFTFNDLGITTSSTNALFSISSDSLNSGEEWYLSQLFLVKESAFTTQINPLLK</sequence>
<reference key="1">
    <citation type="journal article" date="1988" name="J. Bacteriol.">
        <title>Molecular characterization of a gene encoding a 72-kilodalton mosquito-toxic crystal protein from Bacillus thuringiensis subsp. israelensis.</title>
        <authorList>
            <person name="Donovan W.P."/>
            <person name="Dankocsik C.C."/>
            <person name="Gilbert M.P."/>
        </authorList>
    </citation>
    <scope>NUCLEOTIDE SEQUENCE [GENOMIC DNA]</scope>
</reference>
<reference key="2">
    <citation type="journal article" date="1989" name="J. Bacteriol.">
        <title>A 20-kilodalton protein is required for efficient production of the Bacillus thuringiensis subsp. israelensis 27-kilodalton crystal protein in Escherichia coli.</title>
        <authorList>
            <person name="Adams L.F."/>
            <person name="Visick J.E."/>
            <person name="Whiteley H.R."/>
        </authorList>
    </citation>
    <scope>NUCLEOTIDE SEQUENCE [GENOMIC DNA] OF 566-643</scope>
</reference>
<gene>
    <name type="primary">cry11Aa</name>
    <name type="synonym">cryD</name>
    <name type="synonym">cryIVd</name>
    <name type="synonym">cryXIA(a)</name>
</gene>
<keyword id="KW-0002">3D-structure</keyword>
<keyword id="KW-0749">Sporulation</keyword>
<keyword id="KW-0800">Toxin</keyword>
<keyword id="KW-0843">Virulence</keyword>
<comment type="function">
    <text>Promotes colloidosmotic lysis by binding to the midgut epithelial cells of mosquitos.</text>
</comment>
<comment type="developmental stage">
    <text>The crystal protein is produced during sporulation and is accumulated both as an inclusion and as part of the spore coat.</text>
</comment>
<comment type="miscellaneous">
    <text>Toxic segment of the protein is located in the N-terminus.</text>
</comment>
<comment type="similarity">
    <text evidence="1">Belongs to the delta endotoxin family.</text>
</comment>
<dbReference type="EMBL" id="M31737">
    <property type="protein sequence ID" value="AAA22352.1"/>
    <property type="molecule type" value="Genomic_DNA"/>
</dbReference>
<dbReference type="EMBL" id="M22860">
    <property type="protein sequence ID" value="AAA22611.1"/>
    <property type="molecule type" value="Genomic_DNA"/>
</dbReference>
<dbReference type="PIR" id="A43647">
    <property type="entry name" value="A43647"/>
</dbReference>
<dbReference type="RefSeq" id="WP_000390241.1">
    <property type="nucleotide sequence ID" value="NZ_VEIF01000045.1"/>
</dbReference>
<dbReference type="PDB" id="7QX4">
    <property type="method" value="X-ray"/>
    <property type="resolution" value="2.60 A"/>
    <property type="chains" value="A=1-643"/>
</dbReference>
<dbReference type="PDB" id="7QX5">
    <property type="method" value="X-ray"/>
    <property type="resolution" value="3.10 A"/>
    <property type="chains" value="A=1-643"/>
</dbReference>
<dbReference type="PDB" id="7QX6">
    <property type="method" value="X-ray"/>
    <property type="resolution" value="3.30 A"/>
    <property type="chains" value="A=1-643"/>
</dbReference>
<dbReference type="PDB" id="7QX7">
    <property type="method" value="X-ray"/>
    <property type="resolution" value="3.40 A"/>
    <property type="chains" value="A=1-643"/>
</dbReference>
<dbReference type="PDBsum" id="7QX4"/>
<dbReference type="PDBsum" id="7QX5"/>
<dbReference type="PDBsum" id="7QX6"/>
<dbReference type="PDBsum" id="7QX7"/>
<dbReference type="SMR" id="P21256"/>
<dbReference type="TCDB" id="1.C.2.2.1">
    <property type="family name" value="the channel-forming Delta-endotoxin insecticidal crystal protein (icp) family"/>
</dbReference>
<dbReference type="GO" id="GO:0090729">
    <property type="term" value="F:toxin activity"/>
    <property type="evidence" value="ECO:0007669"/>
    <property type="project" value="UniProtKB-KW"/>
</dbReference>
<dbReference type="GO" id="GO:0030435">
    <property type="term" value="P:sporulation resulting in formation of a cellular spore"/>
    <property type="evidence" value="ECO:0007669"/>
    <property type="project" value="UniProtKB-KW"/>
</dbReference>
<dbReference type="GO" id="GO:0001907">
    <property type="term" value="P:symbiont-mediated killing of host cell"/>
    <property type="evidence" value="ECO:0007669"/>
    <property type="project" value="InterPro"/>
</dbReference>
<dbReference type="Gene3D" id="1.20.190.10">
    <property type="entry name" value="Pesticidal crystal protein, N-terminal domain"/>
    <property type="match status" value="1"/>
</dbReference>
<dbReference type="InterPro" id="IPR038979">
    <property type="entry name" value="Pest_crys"/>
</dbReference>
<dbReference type="InterPro" id="IPR005639">
    <property type="entry name" value="Pest_crys_dom_I"/>
</dbReference>
<dbReference type="InterPro" id="IPR036716">
    <property type="entry name" value="Pest_crys_N_sf"/>
</dbReference>
<dbReference type="PANTHER" id="PTHR37003">
    <property type="entry name" value="ENDOTOXIN_N DOMAIN-CONTAINING PROTEIN-RELATED"/>
    <property type="match status" value="1"/>
</dbReference>
<dbReference type="PANTHER" id="PTHR37003:SF2">
    <property type="entry name" value="PESTICIDAL CRYSTAL PROTEIN N-TERMINAL DOMAIN-CONTAINING PROTEIN"/>
    <property type="match status" value="1"/>
</dbReference>
<dbReference type="Pfam" id="PF03945">
    <property type="entry name" value="Endotoxin_N"/>
    <property type="match status" value="1"/>
</dbReference>
<dbReference type="SUPFAM" id="SSF56849">
    <property type="entry name" value="delta-Endotoxin (insectocide), N-terminal domain"/>
    <property type="match status" value="1"/>
</dbReference>
<name>C11AA_BACTI</name>